<gene>
    <name type="primary">pgl</name>
    <name type="synonym">ykgB</name>
    <name type="ordered locus">BSU13010</name>
</gene>
<proteinExistence type="evidence at protein level"/>
<organism>
    <name type="scientific">Bacillus subtilis (strain 168)</name>
    <dbReference type="NCBI Taxonomy" id="224308"/>
    <lineage>
        <taxon>Bacteria</taxon>
        <taxon>Bacillati</taxon>
        <taxon>Bacillota</taxon>
        <taxon>Bacilli</taxon>
        <taxon>Bacillales</taxon>
        <taxon>Bacillaceae</taxon>
        <taxon>Bacillus</taxon>
    </lineage>
</organism>
<keyword id="KW-0119">Carbohydrate metabolism</keyword>
<keyword id="KW-0313">Glucose metabolism</keyword>
<keyword id="KW-0378">Hydrolase</keyword>
<keyword id="KW-1185">Reference proteome</keyword>
<evidence type="ECO:0000256" key="1">
    <source>
        <dbReference type="SAM" id="MobiDB-lite"/>
    </source>
</evidence>
<evidence type="ECO:0000269" key="2">
    <source>
    </source>
</evidence>
<evidence type="ECO:0000303" key="3">
    <source>
    </source>
</evidence>
<evidence type="ECO:0000305" key="4"/>
<protein>
    <recommendedName>
        <fullName evidence="3">6-phosphogluconolactonase</fullName>
        <ecNumber evidence="2">3.1.1.31</ecNumber>
    </recommendedName>
</protein>
<feature type="chain" id="PRO_0000171144" description="6-phosphogluconolactonase">
    <location>
        <begin position="1"/>
        <end position="349"/>
    </location>
</feature>
<feature type="region of interest" description="Disordered" evidence="1">
    <location>
        <begin position="125"/>
        <end position="151"/>
    </location>
</feature>
<feature type="compositionally biased region" description="Basic and acidic residues" evidence="1">
    <location>
        <begin position="138"/>
        <end position="147"/>
    </location>
</feature>
<sequence length="349" mass="38411">MTKYIGYVGTYTKGGSEGIYSFELDTEKKALSEPKLAAKLGNPTYVATNKNNTILYSIEKADGQGGVAAYQIDKNSGELTFLNHQLIDGPSPCHVSVDDQNQFVLTANYHSGKVHVFPVQEDGSLQSPVSEAAHTGKGPHERQEKPHTHYAGFTPEHNYVVAVDLGIDKLYTYKLKDGVLTESGSHSFAPGAGPRHIAFHPKEKYAYVMTELSNEVIALEYNPTAGEFREIQVVSAIPDDFTDNSQGSAIHVTQDGRFVYVANRGHDSIAVFEVNQYSGELAFVERVSTEGNWPRDFVFDPTEGFLVASNEETGNLVLFERDKETGRLTLLPSTVSVPYPVCVKFLHQV</sequence>
<name>6PGL_BACSU</name>
<accession>O34499</accession>
<comment type="function">
    <text evidence="2">Catalyzes the hydrolysis of 6-phosphogluconolactone to 6-phosphogluconate.</text>
</comment>
<comment type="catalytic activity">
    <reaction evidence="2">
        <text>6-phospho-D-glucono-1,5-lactone + H2O = 6-phospho-D-gluconate + H(+)</text>
        <dbReference type="Rhea" id="RHEA:12556"/>
        <dbReference type="ChEBI" id="CHEBI:15377"/>
        <dbReference type="ChEBI" id="CHEBI:15378"/>
        <dbReference type="ChEBI" id="CHEBI:57955"/>
        <dbReference type="ChEBI" id="CHEBI:58759"/>
        <dbReference type="EC" id="3.1.1.31"/>
    </reaction>
</comment>
<comment type="pathway">
    <text evidence="2">Carbohydrate degradation; pentose phosphate pathway; D-ribulose 5-phosphate from D-glucose 6-phosphate (oxidative stage): step 2/3.</text>
</comment>
<comment type="similarity">
    <text evidence="4">Belongs to the cycloisomerase 2 family.</text>
</comment>
<dbReference type="EC" id="3.1.1.31" evidence="2"/>
<dbReference type="EMBL" id="AJ002571">
    <property type="protein sequence ID" value="CAA05581.1"/>
    <property type="molecule type" value="Genomic_DNA"/>
</dbReference>
<dbReference type="EMBL" id="AL009126">
    <property type="protein sequence ID" value="CAB13158.1"/>
    <property type="molecule type" value="Genomic_DNA"/>
</dbReference>
<dbReference type="PIR" id="D69856">
    <property type="entry name" value="D69856"/>
</dbReference>
<dbReference type="RefSeq" id="NP_389184.1">
    <property type="nucleotide sequence ID" value="NC_000964.3"/>
</dbReference>
<dbReference type="RefSeq" id="WP_003244689.1">
    <property type="nucleotide sequence ID" value="NZ_OZ025638.1"/>
</dbReference>
<dbReference type="SMR" id="O34499"/>
<dbReference type="FunCoup" id="O34499">
    <property type="interactions" value="146"/>
</dbReference>
<dbReference type="IntAct" id="O34499">
    <property type="interactions" value="1"/>
</dbReference>
<dbReference type="MINT" id="O34499"/>
<dbReference type="STRING" id="224308.BSU13010"/>
<dbReference type="jPOST" id="O34499"/>
<dbReference type="PaxDb" id="224308-BSU13010"/>
<dbReference type="EnsemblBacteria" id="CAB13158">
    <property type="protein sequence ID" value="CAB13158"/>
    <property type="gene ID" value="BSU_13010"/>
</dbReference>
<dbReference type="GeneID" id="937980"/>
<dbReference type="KEGG" id="bsu:BSU13010"/>
<dbReference type="PATRIC" id="fig|224308.179.peg.1413"/>
<dbReference type="eggNOG" id="COG2706">
    <property type="taxonomic scope" value="Bacteria"/>
</dbReference>
<dbReference type="InParanoid" id="O34499"/>
<dbReference type="OrthoDB" id="9790815at2"/>
<dbReference type="PhylomeDB" id="O34499"/>
<dbReference type="BioCyc" id="BSUB:BSU13010-MONOMER"/>
<dbReference type="UniPathway" id="UPA00115">
    <property type="reaction ID" value="UER00409"/>
</dbReference>
<dbReference type="Proteomes" id="UP000001570">
    <property type="component" value="Chromosome"/>
</dbReference>
<dbReference type="GO" id="GO:0005829">
    <property type="term" value="C:cytosol"/>
    <property type="evidence" value="ECO:0000318"/>
    <property type="project" value="GO_Central"/>
</dbReference>
<dbReference type="GO" id="GO:0017057">
    <property type="term" value="F:6-phosphogluconolactonase activity"/>
    <property type="evidence" value="ECO:0000318"/>
    <property type="project" value="GO_Central"/>
</dbReference>
<dbReference type="GO" id="GO:0006006">
    <property type="term" value="P:glucose metabolic process"/>
    <property type="evidence" value="ECO:0007669"/>
    <property type="project" value="UniProtKB-KW"/>
</dbReference>
<dbReference type="GO" id="GO:0006098">
    <property type="term" value="P:pentose-phosphate shunt"/>
    <property type="evidence" value="ECO:0007669"/>
    <property type="project" value="UniProtKB-UniPathway"/>
</dbReference>
<dbReference type="FunFam" id="2.130.10.10:FF:000306">
    <property type="entry name" value="3-carboxymuconate cyclase"/>
    <property type="match status" value="1"/>
</dbReference>
<dbReference type="Gene3D" id="2.130.10.10">
    <property type="entry name" value="YVTN repeat-like/Quinoprotein amine dehydrogenase"/>
    <property type="match status" value="1"/>
</dbReference>
<dbReference type="InterPro" id="IPR050282">
    <property type="entry name" value="Cycloisomerase_2"/>
</dbReference>
<dbReference type="InterPro" id="IPR011048">
    <property type="entry name" value="Haem_d1_sf"/>
</dbReference>
<dbReference type="InterPro" id="IPR019405">
    <property type="entry name" value="Lactonase_7-beta_prop"/>
</dbReference>
<dbReference type="InterPro" id="IPR015943">
    <property type="entry name" value="WD40/YVTN_repeat-like_dom_sf"/>
</dbReference>
<dbReference type="PANTHER" id="PTHR30344:SF1">
    <property type="entry name" value="6-PHOSPHOGLUCONOLACTONASE"/>
    <property type="match status" value="1"/>
</dbReference>
<dbReference type="PANTHER" id="PTHR30344">
    <property type="entry name" value="6-PHOSPHOGLUCONOLACTONASE-RELATED"/>
    <property type="match status" value="1"/>
</dbReference>
<dbReference type="Pfam" id="PF10282">
    <property type="entry name" value="Lactonase"/>
    <property type="match status" value="1"/>
</dbReference>
<dbReference type="SUPFAM" id="SSF51004">
    <property type="entry name" value="C-terminal (heme d1) domain of cytochrome cd1-nitrite reductase"/>
    <property type="match status" value="1"/>
</dbReference>
<reference key="1">
    <citation type="submission" date="1997-11" db="EMBL/GenBank/DDBJ databases">
        <title>Sequence of the Bacillus subtilis genome between xlyA and ykoR.</title>
        <authorList>
            <person name="Devine K.M."/>
        </authorList>
    </citation>
    <scope>NUCLEOTIDE SEQUENCE [GENOMIC DNA]</scope>
    <source>
        <strain>168</strain>
    </source>
</reference>
<reference key="2">
    <citation type="journal article" date="1997" name="Nature">
        <title>The complete genome sequence of the Gram-positive bacterium Bacillus subtilis.</title>
        <authorList>
            <person name="Kunst F."/>
            <person name="Ogasawara N."/>
            <person name="Moszer I."/>
            <person name="Albertini A.M."/>
            <person name="Alloni G."/>
            <person name="Azevedo V."/>
            <person name="Bertero M.G."/>
            <person name="Bessieres P."/>
            <person name="Bolotin A."/>
            <person name="Borchert S."/>
            <person name="Borriss R."/>
            <person name="Boursier L."/>
            <person name="Brans A."/>
            <person name="Braun M."/>
            <person name="Brignell S.C."/>
            <person name="Bron S."/>
            <person name="Brouillet S."/>
            <person name="Bruschi C.V."/>
            <person name="Caldwell B."/>
            <person name="Capuano V."/>
            <person name="Carter N.M."/>
            <person name="Choi S.-K."/>
            <person name="Codani J.-J."/>
            <person name="Connerton I.F."/>
            <person name="Cummings N.J."/>
            <person name="Daniel R.A."/>
            <person name="Denizot F."/>
            <person name="Devine K.M."/>
            <person name="Duesterhoeft A."/>
            <person name="Ehrlich S.D."/>
            <person name="Emmerson P.T."/>
            <person name="Entian K.-D."/>
            <person name="Errington J."/>
            <person name="Fabret C."/>
            <person name="Ferrari E."/>
            <person name="Foulger D."/>
            <person name="Fritz C."/>
            <person name="Fujita M."/>
            <person name="Fujita Y."/>
            <person name="Fuma S."/>
            <person name="Galizzi A."/>
            <person name="Galleron N."/>
            <person name="Ghim S.-Y."/>
            <person name="Glaser P."/>
            <person name="Goffeau A."/>
            <person name="Golightly E.J."/>
            <person name="Grandi G."/>
            <person name="Guiseppi G."/>
            <person name="Guy B.J."/>
            <person name="Haga K."/>
            <person name="Haiech J."/>
            <person name="Harwood C.R."/>
            <person name="Henaut A."/>
            <person name="Hilbert H."/>
            <person name="Holsappel S."/>
            <person name="Hosono S."/>
            <person name="Hullo M.-F."/>
            <person name="Itaya M."/>
            <person name="Jones L.-M."/>
            <person name="Joris B."/>
            <person name="Karamata D."/>
            <person name="Kasahara Y."/>
            <person name="Klaerr-Blanchard M."/>
            <person name="Klein C."/>
            <person name="Kobayashi Y."/>
            <person name="Koetter P."/>
            <person name="Koningstein G."/>
            <person name="Krogh S."/>
            <person name="Kumano M."/>
            <person name="Kurita K."/>
            <person name="Lapidus A."/>
            <person name="Lardinois S."/>
            <person name="Lauber J."/>
            <person name="Lazarevic V."/>
            <person name="Lee S.-M."/>
            <person name="Levine A."/>
            <person name="Liu H."/>
            <person name="Masuda S."/>
            <person name="Mauel C."/>
            <person name="Medigue C."/>
            <person name="Medina N."/>
            <person name="Mellado R.P."/>
            <person name="Mizuno M."/>
            <person name="Moestl D."/>
            <person name="Nakai S."/>
            <person name="Noback M."/>
            <person name="Noone D."/>
            <person name="O'Reilly M."/>
            <person name="Ogawa K."/>
            <person name="Ogiwara A."/>
            <person name="Oudega B."/>
            <person name="Park S.-H."/>
            <person name="Parro V."/>
            <person name="Pohl T.M."/>
            <person name="Portetelle D."/>
            <person name="Porwollik S."/>
            <person name="Prescott A.M."/>
            <person name="Presecan E."/>
            <person name="Pujic P."/>
            <person name="Purnelle B."/>
            <person name="Rapoport G."/>
            <person name="Rey M."/>
            <person name="Reynolds S."/>
            <person name="Rieger M."/>
            <person name="Rivolta C."/>
            <person name="Rocha E."/>
            <person name="Roche B."/>
            <person name="Rose M."/>
            <person name="Sadaie Y."/>
            <person name="Sato T."/>
            <person name="Scanlan E."/>
            <person name="Schleich S."/>
            <person name="Schroeter R."/>
            <person name="Scoffone F."/>
            <person name="Sekiguchi J."/>
            <person name="Sekowska A."/>
            <person name="Seror S.J."/>
            <person name="Serror P."/>
            <person name="Shin B.-S."/>
            <person name="Soldo B."/>
            <person name="Sorokin A."/>
            <person name="Tacconi E."/>
            <person name="Takagi T."/>
            <person name="Takahashi H."/>
            <person name="Takemaru K."/>
            <person name="Takeuchi M."/>
            <person name="Tamakoshi A."/>
            <person name="Tanaka T."/>
            <person name="Terpstra P."/>
            <person name="Tognoni A."/>
            <person name="Tosato V."/>
            <person name="Uchiyama S."/>
            <person name="Vandenbol M."/>
            <person name="Vannier F."/>
            <person name="Vassarotti A."/>
            <person name="Viari A."/>
            <person name="Wambutt R."/>
            <person name="Wedler E."/>
            <person name="Wedler H."/>
            <person name="Weitzenegger T."/>
            <person name="Winters P."/>
            <person name="Wipat A."/>
            <person name="Yamamoto H."/>
            <person name="Yamane K."/>
            <person name="Yasumoto K."/>
            <person name="Yata K."/>
            <person name="Yoshida K."/>
            <person name="Yoshikawa H.-F."/>
            <person name="Zumstein E."/>
            <person name="Yoshikawa H."/>
            <person name="Danchin A."/>
        </authorList>
    </citation>
    <scope>NUCLEOTIDE SEQUENCE [LARGE SCALE GENOMIC DNA]</scope>
    <source>
        <strain>168</strain>
    </source>
</reference>
<reference key="3">
    <citation type="journal article" date="2012" name="Nat. Chem. Biol.">
        <title>Global probabilistic annotation of metabolic networks enables enzyme discovery.</title>
        <authorList>
            <person name="Plata G."/>
            <person name="Fuhrer T."/>
            <person name="Sauer U."/>
            <person name="Vitkup D."/>
        </authorList>
    </citation>
    <scope>FUNCTION</scope>
    <scope>CATALYTIC ACTIVITY</scope>
</reference>